<proteinExistence type="evidence at protein level"/>
<gene>
    <name type="primary">Apmap</name>
</gene>
<accession>Q9D7N9</accession>
<accession>A2AQX3</accession>
<accession>Q3U4F4</accession>
<comment type="function">
    <text evidence="1">Exhibits strong arylesterase activity with beta-naphthyl acetate and phenyl acetate (By similarity). May play a role in adipocyte differentiation.</text>
</comment>
<comment type="subcellular location">
    <subcellularLocation>
        <location evidence="1">Membrane</location>
        <topology evidence="1">Single-pass type II membrane protein</topology>
    </subcellularLocation>
</comment>
<comment type="tissue specificity">
    <text>Strongly expressed in adipose tissue. Highly expressed in liver, heart, and kidney. Expressed at intermediate level in brain and lung. Weakly expressed in spleen, skeletal muscle and testis.</text>
</comment>
<comment type="developmental stage">
    <text>Expressed during adipocyte differentiation. Expression appears 3 days following induction of adipose conversion.</text>
</comment>
<comment type="PTM">
    <text>Glycosylated in vitro.</text>
</comment>
<comment type="similarity">
    <text evidence="5">Belongs to the strictosidine synthase family.</text>
</comment>
<protein>
    <recommendedName>
        <fullName>Adipocyte plasma membrane-associated protein</fullName>
    </recommendedName>
    <alternativeName>
        <fullName>Protein DD16</fullName>
    </alternativeName>
</protein>
<organism>
    <name type="scientific">Mus musculus</name>
    <name type="common">Mouse</name>
    <dbReference type="NCBI Taxonomy" id="10090"/>
    <lineage>
        <taxon>Eukaryota</taxon>
        <taxon>Metazoa</taxon>
        <taxon>Chordata</taxon>
        <taxon>Craniata</taxon>
        <taxon>Vertebrata</taxon>
        <taxon>Euteleostomi</taxon>
        <taxon>Mammalia</taxon>
        <taxon>Eutheria</taxon>
        <taxon>Euarchontoglires</taxon>
        <taxon>Glires</taxon>
        <taxon>Rodentia</taxon>
        <taxon>Myomorpha</taxon>
        <taxon>Muroidea</taxon>
        <taxon>Muridae</taxon>
        <taxon>Murinae</taxon>
        <taxon>Mus</taxon>
        <taxon>Mus</taxon>
    </lineage>
</organism>
<keyword id="KW-0007">Acetylation</keyword>
<keyword id="KW-0903">Direct protein sequencing</keyword>
<keyword id="KW-0325">Glycoprotein</keyword>
<keyword id="KW-0472">Membrane</keyword>
<keyword id="KW-0597">Phosphoprotein</keyword>
<keyword id="KW-1185">Reference proteome</keyword>
<keyword id="KW-0735">Signal-anchor</keyword>
<keyword id="KW-0812">Transmembrane</keyword>
<keyword id="KW-1133">Transmembrane helix</keyword>
<evidence type="ECO:0000250" key="1"/>
<evidence type="ECO:0000250" key="2">
    <source>
        <dbReference type="UniProtKB" id="Q9HDC9"/>
    </source>
</evidence>
<evidence type="ECO:0000255" key="3"/>
<evidence type="ECO:0000256" key="4">
    <source>
        <dbReference type="SAM" id="MobiDB-lite"/>
    </source>
</evidence>
<evidence type="ECO:0000305" key="5"/>
<feature type="initiator methionine" description="Removed" evidence="2">
    <location>
        <position position="1"/>
    </location>
</feature>
<feature type="chain" id="PRO_0000205946" description="Adipocyte plasma membrane-associated protein">
    <location>
        <begin position="2"/>
        <end position="415"/>
    </location>
</feature>
<feature type="topological domain" description="Cytoplasmic" evidence="3">
    <location>
        <begin position="2"/>
        <end position="39"/>
    </location>
</feature>
<feature type="transmembrane region" description="Helical; Signal-anchor for type II membrane protein" evidence="3">
    <location>
        <begin position="40"/>
        <end position="60"/>
    </location>
</feature>
<feature type="topological domain" description="Extracellular" evidence="3">
    <location>
        <begin position="61"/>
        <end position="415"/>
    </location>
</feature>
<feature type="region of interest" description="Disordered" evidence="4">
    <location>
        <begin position="1"/>
        <end position="29"/>
    </location>
</feature>
<feature type="modified residue" description="N-acetylserine" evidence="2">
    <location>
        <position position="2"/>
    </location>
</feature>
<feature type="modified residue" description="Phosphothreonine" evidence="2">
    <location>
        <position position="19"/>
    </location>
</feature>
<feature type="glycosylation site" description="N-linked (GlcNAc...) asparagine" evidence="3">
    <location>
        <position position="159"/>
    </location>
</feature>
<reference key="1">
    <citation type="journal article" date="2001" name="Biochem. J.">
        <title>Identification of a novel integral plasma membrane protein induced during adipocyte differentiation.</title>
        <authorList>
            <person name="Albrektsen T."/>
            <person name="Richter H.E."/>
            <person name="Clausen J.T."/>
            <person name="Fleckner J."/>
        </authorList>
    </citation>
    <scope>NUCLEOTIDE SEQUENCE [MRNA]</scope>
    <source>
        <tissue>Brain</tissue>
    </source>
</reference>
<reference key="2">
    <citation type="journal article" date="2005" name="Science">
        <title>The transcriptional landscape of the mammalian genome.</title>
        <authorList>
            <person name="Carninci P."/>
            <person name="Kasukawa T."/>
            <person name="Katayama S."/>
            <person name="Gough J."/>
            <person name="Frith M.C."/>
            <person name="Maeda N."/>
            <person name="Oyama R."/>
            <person name="Ravasi T."/>
            <person name="Lenhard B."/>
            <person name="Wells C."/>
            <person name="Kodzius R."/>
            <person name="Shimokawa K."/>
            <person name="Bajic V.B."/>
            <person name="Brenner S.E."/>
            <person name="Batalov S."/>
            <person name="Forrest A.R."/>
            <person name="Zavolan M."/>
            <person name="Davis M.J."/>
            <person name="Wilming L.G."/>
            <person name="Aidinis V."/>
            <person name="Allen J.E."/>
            <person name="Ambesi-Impiombato A."/>
            <person name="Apweiler R."/>
            <person name="Aturaliya R.N."/>
            <person name="Bailey T.L."/>
            <person name="Bansal M."/>
            <person name="Baxter L."/>
            <person name="Beisel K.W."/>
            <person name="Bersano T."/>
            <person name="Bono H."/>
            <person name="Chalk A.M."/>
            <person name="Chiu K.P."/>
            <person name="Choudhary V."/>
            <person name="Christoffels A."/>
            <person name="Clutterbuck D.R."/>
            <person name="Crowe M.L."/>
            <person name="Dalla E."/>
            <person name="Dalrymple B.P."/>
            <person name="de Bono B."/>
            <person name="Della Gatta G."/>
            <person name="di Bernardo D."/>
            <person name="Down T."/>
            <person name="Engstrom P."/>
            <person name="Fagiolini M."/>
            <person name="Faulkner G."/>
            <person name="Fletcher C.F."/>
            <person name="Fukushima T."/>
            <person name="Furuno M."/>
            <person name="Futaki S."/>
            <person name="Gariboldi M."/>
            <person name="Georgii-Hemming P."/>
            <person name="Gingeras T.R."/>
            <person name="Gojobori T."/>
            <person name="Green R.E."/>
            <person name="Gustincich S."/>
            <person name="Harbers M."/>
            <person name="Hayashi Y."/>
            <person name="Hensch T.K."/>
            <person name="Hirokawa N."/>
            <person name="Hill D."/>
            <person name="Huminiecki L."/>
            <person name="Iacono M."/>
            <person name="Ikeo K."/>
            <person name="Iwama A."/>
            <person name="Ishikawa T."/>
            <person name="Jakt M."/>
            <person name="Kanapin A."/>
            <person name="Katoh M."/>
            <person name="Kawasawa Y."/>
            <person name="Kelso J."/>
            <person name="Kitamura H."/>
            <person name="Kitano H."/>
            <person name="Kollias G."/>
            <person name="Krishnan S.P."/>
            <person name="Kruger A."/>
            <person name="Kummerfeld S.K."/>
            <person name="Kurochkin I.V."/>
            <person name="Lareau L.F."/>
            <person name="Lazarevic D."/>
            <person name="Lipovich L."/>
            <person name="Liu J."/>
            <person name="Liuni S."/>
            <person name="McWilliam S."/>
            <person name="Madan Babu M."/>
            <person name="Madera M."/>
            <person name="Marchionni L."/>
            <person name="Matsuda H."/>
            <person name="Matsuzawa S."/>
            <person name="Miki H."/>
            <person name="Mignone F."/>
            <person name="Miyake S."/>
            <person name="Morris K."/>
            <person name="Mottagui-Tabar S."/>
            <person name="Mulder N."/>
            <person name="Nakano N."/>
            <person name="Nakauchi H."/>
            <person name="Ng P."/>
            <person name="Nilsson R."/>
            <person name="Nishiguchi S."/>
            <person name="Nishikawa S."/>
            <person name="Nori F."/>
            <person name="Ohara O."/>
            <person name="Okazaki Y."/>
            <person name="Orlando V."/>
            <person name="Pang K.C."/>
            <person name="Pavan W.J."/>
            <person name="Pavesi G."/>
            <person name="Pesole G."/>
            <person name="Petrovsky N."/>
            <person name="Piazza S."/>
            <person name="Reed J."/>
            <person name="Reid J.F."/>
            <person name="Ring B.Z."/>
            <person name="Ringwald M."/>
            <person name="Rost B."/>
            <person name="Ruan Y."/>
            <person name="Salzberg S.L."/>
            <person name="Sandelin A."/>
            <person name="Schneider C."/>
            <person name="Schoenbach C."/>
            <person name="Sekiguchi K."/>
            <person name="Semple C.A."/>
            <person name="Seno S."/>
            <person name="Sessa L."/>
            <person name="Sheng Y."/>
            <person name="Shibata Y."/>
            <person name="Shimada H."/>
            <person name="Shimada K."/>
            <person name="Silva D."/>
            <person name="Sinclair B."/>
            <person name="Sperling S."/>
            <person name="Stupka E."/>
            <person name="Sugiura K."/>
            <person name="Sultana R."/>
            <person name="Takenaka Y."/>
            <person name="Taki K."/>
            <person name="Tammoja K."/>
            <person name="Tan S.L."/>
            <person name="Tang S."/>
            <person name="Taylor M.S."/>
            <person name="Tegner J."/>
            <person name="Teichmann S.A."/>
            <person name="Ueda H.R."/>
            <person name="van Nimwegen E."/>
            <person name="Verardo R."/>
            <person name="Wei C.L."/>
            <person name="Yagi K."/>
            <person name="Yamanishi H."/>
            <person name="Zabarovsky E."/>
            <person name="Zhu S."/>
            <person name="Zimmer A."/>
            <person name="Hide W."/>
            <person name="Bult C."/>
            <person name="Grimmond S.M."/>
            <person name="Teasdale R.D."/>
            <person name="Liu E.T."/>
            <person name="Brusic V."/>
            <person name="Quackenbush J."/>
            <person name="Wahlestedt C."/>
            <person name="Mattick J.S."/>
            <person name="Hume D.A."/>
            <person name="Kai C."/>
            <person name="Sasaki D."/>
            <person name="Tomaru Y."/>
            <person name="Fukuda S."/>
            <person name="Kanamori-Katayama M."/>
            <person name="Suzuki M."/>
            <person name="Aoki J."/>
            <person name="Arakawa T."/>
            <person name="Iida J."/>
            <person name="Imamura K."/>
            <person name="Itoh M."/>
            <person name="Kato T."/>
            <person name="Kawaji H."/>
            <person name="Kawagashira N."/>
            <person name="Kawashima T."/>
            <person name="Kojima M."/>
            <person name="Kondo S."/>
            <person name="Konno H."/>
            <person name="Nakano K."/>
            <person name="Ninomiya N."/>
            <person name="Nishio T."/>
            <person name="Okada M."/>
            <person name="Plessy C."/>
            <person name="Shibata K."/>
            <person name="Shiraki T."/>
            <person name="Suzuki S."/>
            <person name="Tagami M."/>
            <person name="Waki K."/>
            <person name="Watahiki A."/>
            <person name="Okamura-Oho Y."/>
            <person name="Suzuki H."/>
            <person name="Kawai J."/>
            <person name="Hayashizaki Y."/>
        </authorList>
    </citation>
    <scope>NUCLEOTIDE SEQUENCE [LARGE SCALE MRNA]</scope>
    <source>
        <strain>C57BL/6J</strain>
        <strain>NOD</strain>
        <tissue>Tongue</tissue>
    </source>
</reference>
<reference key="3">
    <citation type="journal article" date="2009" name="PLoS Biol.">
        <title>Lineage-specific biology revealed by a finished genome assembly of the mouse.</title>
        <authorList>
            <person name="Church D.M."/>
            <person name="Goodstadt L."/>
            <person name="Hillier L.W."/>
            <person name="Zody M.C."/>
            <person name="Goldstein S."/>
            <person name="She X."/>
            <person name="Bult C.J."/>
            <person name="Agarwala R."/>
            <person name="Cherry J.L."/>
            <person name="DiCuccio M."/>
            <person name="Hlavina W."/>
            <person name="Kapustin Y."/>
            <person name="Meric P."/>
            <person name="Maglott D."/>
            <person name="Birtle Z."/>
            <person name="Marques A.C."/>
            <person name="Graves T."/>
            <person name="Zhou S."/>
            <person name="Teague B."/>
            <person name="Potamousis K."/>
            <person name="Churas C."/>
            <person name="Place M."/>
            <person name="Herschleb J."/>
            <person name="Runnheim R."/>
            <person name="Forrest D."/>
            <person name="Amos-Landgraf J."/>
            <person name="Schwartz D.C."/>
            <person name="Cheng Z."/>
            <person name="Lindblad-Toh K."/>
            <person name="Eichler E.E."/>
            <person name="Ponting C.P."/>
        </authorList>
    </citation>
    <scope>NUCLEOTIDE SEQUENCE [LARGE SCALE GENOMIC DNA]</scope>
    <source>
        <strain>C57BL/6J</strain>
    </source>
</reference>
<reference key="4">
    <citation type="submission" date="2005-07" db="EMBL/GenBank/DDBJ databases">
        <authorList>
            <person name="Mural R.J."/>
            <person name="Adams M.D."/>
            <person name="Myers E.W."/>
            <person name="Smith H.O."/>
            <person name="Venter J.C."/>
        </authorList>
    </citation>
    <scope>NUCLEOTIDE SEQUENCE [LARGE SCALE GENOMIC DNA]</scope>
</reference>
<reference key="5">
    <citation type="journal article" date="2004" name="Genome Res.">
        <title>The status, quality, and expansion of the NIH full-length cDNA project: the Mammalian Gene Collection (MGC).</title>
        <authorList>
            <consortium name="The MGC Project Team"/>
        </authorList>
    </citation>
    <scope>NUCLEOTIDE SEQUENCE [LARGE SCALE MRNA]</scope>
    <source>
        <strain>C57BL/6J</strain>
        <tissue>Brain</tissue>
    </source>
</reference>
<reference key="6">
    <citation type="submission" date="2007-04" db="UniProtKB">
        <authorList>
            <person name="Lubec G."/>
            <person name="Kang S.U."/>
        </authorList>
    </citation>
    <scope>PROTEIN SEQUENCE OF 170-178; 183-194; 196-206 AND 324-341</scope>
    <scope>IDENTIFICATION BY MASS SPECTROMETRY</scope>
    <source>
        <strain>C57BL/6J</strain>
        <tissue>Brain</tissue>
    </source>
</reference>
<reference key="7">
    <citation type="journal article" date="2010" name="Cell">
        <title>A tissue-specific atlas of mouse protein phosphorylation and expression.</title>
        <authorList>
            <person name="Huttlin E.L."/>
            <person name="Jedrychowski M.P."/>
            <person name="Elias J.E."/>
            <person name="Goswami T."/>
            <person name="Rad R."/>
            <person name="Beausoleil S.A."/>
            <person name="Villen J."/>
            <person name="Haas W."/>
            <person name="Sowa M.E."/>
            <person name="Gygi S.P."/>
        </authorList>
    </citation>
    <scope>IDENTIFICATION BY MASS SPECTROMETRY [LARGE SCALE ANALYSIS]</scope>
    <source>
        <tissue>Brain</tissue>
        <tissue>Brown adipose tissue</tissue>
        <tissue>Heart</tissue>
        <tissue>Kidney</tissue>
        <tissue>Liver</tissue>
        <tissue>Lung</tissue>
        <tissue>Pancreas</tissue>
        <tissue>Spleen</tissue>
        <tissue>Testis</tissue>
    </source>
</reference>
<name>APMAP_MOUSE</name>
<sequence>MSEADGLRQRRPLRPQVVTDDGQVPEVKEGSSFSGRVFRMTFLMLAVSLAIPLLGAMMLLESPIDPQSFSFKEPPFMFGVLHPNTKLRQAERLFENQLSGPESIVNIGDVLFTGTADGRVVKLENGEIETIARFGSGPCKTRDDEPTCGRPLGIRAGPNGTLFVVDAYKGLFEVNPQKRSVKLLLSSETPIEGKKMSFVNDLTVTRDGRKIYFTDSSSKWQRRDYLLLVMEATDDGRLLEYDTVTKEVKVLLDQLQFPNGVQLSPEEDFVLVAETTMARIRRVYVSGLMKGGADMFVENMPGFPDNIRPSSSGGYWVAAATIRANPGFSMLDFLSDKPFIKRMIFKMFSQETVMKFVPRYSLVLEVSDSGAFRRSLHDPDGQVVTYVSEAHEHDGYLYLGSFRSPFICRLSLQSI</sequence>
<dbReference type="EMBL" id="AJ310638">
    <property type="protein sequence ID" value="CAC83967.1"/>
    <property type="molecule type" value="mRNA"/>
</dbReference>
<dbReference type="EMBL" id="AK009057">
    <property type="protein sequence ID" value="BAB26050.1"/>
    <property type="molecule type" value="mRNA"/>
</dbReference>
<dbReference type="EMBL" id="AK154266">
    <property type="protein sequence ID" value="BAE32477.1"/>
    <property type="molecule type" value="mRNA"/>
</dbReference>
<dbReference type="EMBL" id="AL845174">
    <property type="status" value="NOT_ANNOTATED_CDS"/>
    <property type="molecule type" value="Genomic_DNA"/>
</dbReference>
<dbReference type="EMBL" id="CH466519">
    <property type="protein sequence ID" value="EDL28569.1"/>
    <property type="molecule type" value="Genomic_DNA"/>
</dbReference>
<dbReference type="EMBL" id="BC055706">
    <property type="protein sequence ID" value="AAH55706.1"/>
    <property type="molecule type" value="mRNA"/>
</dbReference>
<dbReference type="CCDS" id="CCDS16858.1"/>
<dbReference type="RefSeq" id="NP_082253.1">
    <property type="nucleotide sequence ID" value="NM_027977.3"/>
</dbReference>
<dbReference type="SMR" id="Q9D7N9"/>
<dbReference type="BioGRID" id="215002">
    <property type="interactions" value="12"/>
</dbReference>
<dbReference type="FunCoup" id="Q9D7N9">
    <property type="interactions" value="842"/>
</dbReference>
<dbReference type="IntAct" id="Q9D7N9">
    <property type="interactions" value="2"/>
</dbReference>
<dbReference type="STRING" id="10090.ENSMUSP00000040840"/>
<dbReference type="GlyConnect" id="2112">
    <property type="glycosylation" value="6 N-Linked glycans (1 site)"/>
</dbReference>
<dbReference type="GlyCosmos" id="Q9D7N9">
    <property type="glycosylation" value="1 site, 6 glycans"/>
</dbReference>
<dbReference type="GlyGen" id="Q9D7N9">
    <property type="glycosylation" value="2 sites, 6 N-linked glycans (1 site), 1 O-linked glycan (1 site)"/>
</dbReference>
<dbReference type="iPTMnet" id="Q9D7N9"/>
<dbReference type="PhosphoSitePlus" id="Q9D7N9"/>
<dbReference type="SwissPalm" id="Q9D7N9"/>
<dbReference type="jPOST" id="Q9D7N9"/>
<dbReference type="PaxDb" id="10090-ENSMUSP00000040840"/>
<dbReference type="PeptideAtlas" id="Q9D7N9"/>
<dbReference type="ProteomicsDB" id="296380"/>
<dbReference type="Pumba" id="Q9D7N9"/>
<dbReference type="Antibodypedia" id="2012">
    <property type="antibodies" value="304 antibodies from 22 providers"/>
</dbReference>
<dbReference type="DNASU" id="71881"/>
<dbReference type="Ensembl" id="ENSMUST00000046399.7">
    <property type="protein sequence ID" value="ENSMUSP00000040840.7"/>
    <property type="gene ID" value="ENSMUSG00000033096.8"/>
</dbReference>
<dbReference type="GeneID" id="71881"/>
<dbReference type="KEGG" id="mmu:71881"/>
<dbReference type="UCSC" id="uc008mud.1">
    <property type="organism name" value="mouse"/>
</dbReference>
<dbReference type="AGR" id="MGI:1919131"/>
<dbReference type="CTD" id="57136"/>
<dbReference type="MGI" id="MGI:1919131">
    <property type="gene designation" value="Apmap"/>
</dbReference>
<dbReference type="VEuPathDB" id="HostDB:ENSMUSG00000033096"/>
<dbReference type="eggNOG" id="KOG1520">
    <property type="taxonomic scope" value="Eukaryota"/>
</dbReference>
<dbReference type="GeneTree" id="ENSGT00440000039984"/>
<dbReference type="HOGENOM" id="CLU_023267_0_0_1"/>
<dbReference type="InParanoid" id="Q9D7N9"/>
<dbReference type="OMA" id="YRITRYW"/>
<dbReference type="OrthoDB" id="5307922at2759"/>
<dbReference type="PhylomeDB" id="Q9D7N9"/>
<dbReference type="TreeFam" id="TF316475"/>
<dbReference type="BioGRID-ORCS" id="71881">
    <property type="hits" value="3 hits in 79 CRISPR screens"/>
</dbReference>
<dbReference type="ChiTaRS" id="Apmap">
    <property type="organism name" value="mouse"/>
</dbReference>
<dbReference type="PRO" id="PR:Q9D7N9"/>
<dbReference type="Proteomes" id="UP000000589">
    <property type="component" value="Chromosome 2"/>
</dbReference>
<dbReference type="RNAct" id="Q9D7N9">
    <property type="molecule type" value="protein"/>
</dbReference>
<dbReference type="Bgee" id="ENSMUSG00000033096">
    <property type="expression patterns" value="Expressed in decidua and 251 other cell types or tissues"/>
</dbReference>
<dbReference type="GO" id="GO:0009986">
    <property type="term" value="C:cell surface"/>
    <property type="evidence" value="ECO:0007669"/>
    <property type="project" value="Ensembl"/>
</dbReference>
<dbReference type="GO" id="GO:0016020">
    <property type="term" value="C:membrane"/>
    <property type="evidence" value="ECO:0007669"/>
    <property type="project" value="UniProtKB-SubCell"/>
</dbReference>
<dbReference type="GO" id="GO:0004064">
    <property type="term" value="F:arylesterase activity"/>
    <property type="evidence" value="ECO:0007669"/>
    <property type="project" value="Ensembl"/>
</dbReference>
<dbReference type="FunFam" id="2.120.10.30:FF:000041">
    <property type="entry name" value="adipocyte plasma membrane-associated protein"/>
    <property type="match status" value="1"/>
</dbReference>
<dbReference type="Gene3D" id="2.120.10.30">
    <property type="entry name" value="TolB, C-terminal domain"/>
    <property type="match status" value="1"/>
</dbReference>
<dbReference type="InterPro" id="IPR011042">
    <property type="entry name" value="6-blade_b-propeller_TolB-like"/>
</dbReference>
<dbReference type="InterPro" id="IPR018119">
    <property type="entry name" value="Strictosidine_synth_cons-reg"/>
</dbReference>
<dbReference type="PANTHER" id="PTHR10426:SF130">
    <property type="entry name" value="ADIPOCYTE PLASMA MEMBRANE-ASSOCIATED PROTEIN"/>
    <property type="match status" value="1"/>
</dbReference>
<dbReference type="PANTHER" id="PTHR10426">
    <property type="entry name" value="STRICTOSIDINE SYNTHASE-RELATED"/>
    <property type="match status" value="1"/>
</dbReference>
<dbReference type="Pfam" id="PF20067">
    <property type="entry name" value="SSL_N"/>
    <property type="match status" value="1"/>
</dbReference>
<dbReference type="Pfam" id="PF03088">
    <property type="entry name" value="Str_synth"/>
    <property type="match status" value="1"/>
</dbReference>
<dbReference type="SUPFAM" id="SSF63829">
    <property type="entry name" value="Calcium-dependent phosphotriesterase"/>
    <property type="match status" value="1"/>
</dbReference>